<accession>B2RH57</accession>
<protein>
    <recommendedName>
        <fullName>Major fimbrium subunit FimC</fullName>
    </recommendedName>
</protein>
<reference evidence="10 11" key="1">
    <citation type="journal article" date="2008" name="DNA Res.">
        <title>Determination of the genome sequence of Porphyromonas gingivalis strain ATCC 33277 and genomic comparison with strain W83 revealed extensive genome rearrangements in P. gingivalis.</title>
        <authorList>
            <person name="Naito M."/>
            <person name="Hirakawa H."/>
            <person name="Yamashita A."/>
            <person name="Ohara N."/>
            <person name="Shoji M."/>
            <person name="Yukitake H."/>
            <person name="Nakayama K."/>
            <person name="Toh H."/>
            <person name="Yoshimura F."/>
            <person name="Kuhara S."/>
            <person name="Hattori M."/>
            <person name="Hayashi T."/>
            <person name="Nakayama K."/>
        </authorList>
    </citation>
    <scope>NUCLEOTIDE SEQUENCE [LARGE SCALE GENOMIC DNA]</scope>
    <source>
        <strain evidence="11">ATCC 33277 / DSM 20709 / CIP 103683 / JCM 12257 / NCTC 11834 / 2561</strain>
    </source>
</reference>
<reference key="2">
    <citation type="journal article" date="2007" name="J. Immunol.">
        <title>Fimbrial proteins of porphyromonas gingivalis mediate in vivo virulence and exploit TLR2 and complement receptor 3 to persist in macrophages.</title>
        <authorList>
            <person name="Wang M."/>
            <person name="Shakhatreh M.A."/>
            <person name="James D."/>
            <person name="Liang S."/>
            <person name="Nishiyama S."/>
            <person name="Yoshimura F."/>
            <person name="Demuth D.R."/>
            <person name="Hajishengallis G."/>
        </authorList>
    </citation>
    <scope>FUNCTION</scope>
    <scope>SUBCELLULAR LOCATION</scope>
    <scope>SUBUNIT</scope>
    <source>
        <strain evidence="6">ATCC 33277 / DSM 20709 / CIP 103683 / JCM 12257 / NCTC 11834 / 2561</strain>
    </source>
</reference>
<reference key="3">
    <citation type="journal article" date="2007" name="Microbiology">
        <title>Involvement of minor components associated with the FimA fimbriae of Porphyromonas gingivalis in adhesive functions.</title>
        <authorList>
            <person name="Nishiyama S."/>
            <person name="Murakami Y."/>
            <person name="Nagata H."/>
            <person name="Shizukuishi S."/>
            <person name="Kawagishi I."/>
            <person name="Yoshimura F."/>
        </authorList>
    </citation>
    <scope>IDENTIFICATION</scope>
    <scope>FUNCTION</scope>
    <scope>SUBCELLULAR LOCATION</scope>
    <scope>SUBUNIT</scope>
    <source>
        <strain evidence="5">ATCC 33277 / DSM 20709 / CIP 103683 / JCM 12257 / NCTC 11834 / 2561</strain>
    </source>
</reference>
<reference key="4">
    <citation type="journal article" date="2009" name="Infect. Immun.">
        <title>Host adhesive activities and virulence of novel fimbrial proteins of Porphyromonas gingivalis.</title>
        <authorList>
            <person name="Pierce D.L."/>
            <person name="Nishiyama S."/>
            <person name="Liang S."/>
            <person name="Wang M."/>
            <person name="Triantafilou M."/>
            <person name="Triantafilou K."/>
            <person name="Yoshimura F."/>
            <person name="Demuth D.R."/>
            <person name="Hajishengallis G."/>
        </authorList>
    </citation>
    <scope>FUNCTION</scope>
    <scope>DISRUPTION PHENOTYPE</scope>
    <scope>IDENTIFICATION IN A COMPLEX CONTAINING FIMC; FIMD AND FIME</scope>
    <scope>INTERACTION WITH HOST CXCR4</scope>
    <scope>SUBUNIT</scope>
    <scope>SUBCELLULAR LOCATION</scope>
    <source>
        <strain evidence="7">ATCC 33277 / DSM 20709 / CIP 103683 / JCM 12257 / NCTC 11834 / 2561</strain>
    </source>
</reference>
<organism>
    <name type="scientific">Porphyromonas gingivalis (strain ATCC 33277 / DSM 20709 / CIP 103683 / JCM 12257 / NCTC 11834 / 2561)</name>
    <dbReference type="NCBI Taxonomy" id="431947"/>
    <lineage>
        <taxon>Bacteria</taxon>
        <taxon>Pseudomonadati</taxon>
        <taxon>Bacteroidota</taxon>
        <taxon>Bacteroidia</taxon>
        <taxon>Bacteroidales</taxon>
        <taxon>Porphyromonadaceae</taxon>
        <taxon>Porphyromonas</taxon>
    </lineage>
</organism>
<name>FIMC_PORG3</name>
<keyword id="KW-0998">Cell outer membrane</keyword>
<keyword id="KW-0281">Fimbrium</keyword>
<keyword id="KW-0449">Lipoprotein</keyword>
<keyword id="KW-0472">Membrane</keyword>
<keyword id="KW-0564">Palmitate</keyword>
<keyword id="KW-0732">Signal</keyword>
<keyword id="KW-0843">Virulence</keyword>
<feature type="signal peptide" evidence="2">
    <location>
        <begin position="1"/>
        <end position="28"/>
    </location>
</feature>
<feature type="propeptide" id="PRO_0000436731" evidence="1">
    <location>
        <begin position="29"/>
        <end position="56"/>
    </location>
</feature>
<feature type="chain" id="PRO_5002781598" description="Major fimbrium subunit FimC" evidence="2">
    <location>
        <begin position="57"/>
        <end position="453"/>
    </location>
</feature>
<feature type="lipid moiety-binding region" description="N-palmitoyl cysteine" evidence="2">
    <location>
        <position position="29"/>
    </location>
</feature>
<feature type="lipid moiety-binding region" description="S-diacylglycerol cysteine" evidence="2">
    <location>
        <position position="29"/>
    </location>
</feature>
<proteinExistence type="evidence at protein level"/>
<comment type="function">
    <text evidence="3 4 8">Minor component of fimbriae (PubMed:17526848). These long, filamentous pili are attached to the cell surface; they mediate biofilm formation, adhesion onto host cells and onto other bacteria that are part of the oral microbiome (PubMed:17526848, PubMed:19506009). They play an important role in invasion of periodontal tissues and are major virulence factors (Probable). FimC, FimD and FimE contribute to interaction with host CXCR4 and thereby down-regulate the TLR2-mediated host immune response (PubMed:19506009).</text>
</comment>
<comment type="subunit">
    <text evidence="3 4">Fimbriae are composed of a major, structural subunit and the minor components FimC, FimD and FimE (PubMed:17526848). Identified in a complex composed of FimC, FimD and FimE (in vitro) (PubMed:19506009). The complex interacts with host extracellular matrix proteins, including fibronectin and type I collagen (PubMed:17526848, PubMed:19506009). Interacts with host CXCR4 (PubMed:19506009).</text>
</comment>
<comment type="subcellular location">
    <subcellularLocation>
        <location evidence="3 4">Fimbrium</location>
    </subcellularLocation>
    <subcellularLocation>
        <location evidence="8">Cell outer membrane</location>
    </subcellularLocation>
    <text evidence="8 9">Probably synthesized as a palmitoylated precursor. Efficient export to the outer membrane and integration into fimbriae requires lipidation and subsequent proteolytic removal of the lipidated propeptide (Probable). Probably part of the fimbrium tip, as a part of the complex formed by FimC, FimD and FimE.</text>
</comment>
<comment type="disruption phenotype">
    <text evidence="4">Triple mutants lacking FimC, FimD and FimE show strongly decreased interaction with host CXCR4 and impaired down-regulation of the TLR2-mediated innate immune response, resulting in strongly reduced survival of the bacteria.</text>
</comment>
<comment type="miscellaneous">
    <text evidence="8">The name (major fimbrium subunit) does not indicate the abundance of the protein, but is derived from the greater length of the major fimbriae. In strain ATCC 33277 and strain ATCC BAA-1703 / FDC 381, major fimbriae are 300 - 1600 nM in length and about 5 nm in diameter. In contrast, minor fimbriae are only about 80 - 120 nm long. This length difference is observed only in a small number of strains, including strain ATCC 33277 and strain ATCC BAA-1703 / FDC 381, and is due to a loss of function mutation in FimB, a protein that restricts fimbrial length in other strains.</text>
</comment>
<comment type="similarity">
    <text evidence="8">Belongs to the bacteroidetes fimbrillin superfamily. FimA/Mfa1 family.</text>
</comment>
<comment type="sequence caution" evidence="8">
    <conflict type="erroneous initiation">
        <sequence resource="EMBL-CDS" id="BAG32702"/>
    </conflict>
    <text>Extended N-terminus.</text>
</comment>
<comment type="online information" name="Protein Spotlight">
    <link uri="https://www.proteinspotlight.org/back_issues/182/"/>
    <text>A loosening of habits - Issue 182 of August 2016</text>
</comment>
<sequence length="453" mass="50159">MKMKYFHHPSGLLPRLLLLLLLTMGAVACTKEDNPDQPTSDEVATVKMSLDDVEMRGGDLYSGEDLIKKVRIFVFREGLNGLWVLDKQKLFASGQSDFQNPFTISAHAGPRQIYVIANEPDALTTKLDKILFKKELEDMQAPDVNEPIVRPFTMTGMATATLNPQGTVQANISLNRIAAKITLDIKQVTPGSDVIKITKVQILRNAKNSRLLEGTNKPTGYWNWANACDLPLTNNGSAQSIIQASAPLYVYENIGSDSDSSGRATQLVVEALYNGIKTRYYAYVNDKTTTANHHYSIRRNHHYKLDGTITKMGEFSSLLLTTTVLPWTVENLDYGFLVPYVAEINPHAVITQDNVVTFENSLSFTVRIKGRDGSRWKATLDNGLEFGFDSGSAIDGAADGTTVYTIKVKALKPNGIGIQRRTNLFFTVDGKKVILDKNINPQPTDIKIIQQGL</sequence>
<evidence type="ECO:0000255" key="1"/>
<evidence type="ECO:0000255" key="2">
    <source>
        <dbReference type="PROSITE-ProRule" id="PRU00303"/>
    </source>
</evidence>
<evidence type="ECO:0000269" key="3">
    <source>
    </source>
</evidence>
<evidence type="ECO:0000269" key="4">
    <source>
    </source>
</evidence>
<evidence type="ECO:0000303" key="5">
    <source>
    </source>
</evidence>
<evidence type="ECO:0000303" key="6">
    <source>
    </source>
</evidence>
<evidence type="ECO:0000303" key="7">
    <source>
    </source>
</evidence>
<evidence type="ECO:0000305" key="8"/>
<evidence type="ECO:0000305" key="9">
    <source>
    </source>
</evidence>
<evidence type="ECO:0000312" key="10">
    <source>
        <dbReference type="EMBL" id="BAG32702.1"/>
    </source>
</evidence>
<evidence type="ECO:0000312" key="11">
    <source>
        <dbReference type="Proteomes" id="UP000008842"/>
    </source>
</evidence>
<dbReference type="EMBL" id="AP009380">
    <property type="protein sequence ID" value="BAG32702.1"/>
    <property type="status" value="ALT_INIT"/>
    <property type="molecule type" value="Genomic_DNA"/>
</dbReference>
<dbReference type="RefSeq" id="WP_039417483.1">
    <property type="nucleotide sequence ID" value="NC_010729.1"/>
</dbReference>
<dbReference type="SMR" id="B2RH57"/>
<dbReference type="GeneID" id="29255428"/>
<dbReference type="KEGG" id="pgn:PGN_0183"/>
<dbReference type="eggNOG" id="ENOG502ZAVK">
    <property type="taxonomic scope" value="Bacteria"/>
</dbReference>
<dbReference type="HOGENOM" id="CLU_634398_0_0_10"/>
<dbReference type="OrthoDB" id="1012150at2"/>
<dbReference type="BioCyc" id="PGIN431947:G1G2V-199-MONOMER"/>
<dbReference type="Proteomes" id="UP000008842">
    <property type="component" value="Chromosome"/>
</dbReference>
<dbReference type="GO" id="GO:0009279">
    <property type="term" value="C:cell outer membrane"/>
    <property type="evidence" value="ECO:0007669"/>
    <property type="project" value="UniProtKB-SubCell"/>
</dbReference>
<dbReference type="GO" id="GO:0009289">
    <property type="term" value="C:pilus"/>
    <property type="evidence" value="ECO:0000314"/>
    <property type="project" value="UniProtKB"/>
</dbReference>
<dbReference type="GO" id="GO:0046810">
    <property type="term" value="F:host cell extracellular matrix binding"/>
    <property type="evidence" value="ECO:0000314"/>
    <property type="project" value="UniProtKB"/>
</dbReference>
<dbReference type="GO" id="GO:0098609">
    <property type="term" value="P:cell-cell adhesion"/>
    <property type="evidence" value="ECO:0000315"/>
    <property type="project" value="UniProtKB"/>
</dbReference>
<dbReference type="Gene3D" id="2.60.40.2580">
    <property type="match status" value="1"/>
</dbReference>
<dbReference type="InterPro" id="IPR029141">
    <property type="entry name" value="FimA_N"/>
</dbReference>
<dbReference type="Pfam" id="PF06321">
    <property type="entry name" value="P_gingi_FimA"/>
    <property type="match status" value="1"/>
</dbReference>
<dbReference type="PROSITE" id="PS51257">
    <property type="entry name" value="PROKAR_LIPOPROTEIN"/>
    <property type="match status" value="1"/>
</dbReference>
<gene>
    <name evidence="10" type="primary">fimC</name>
    <name evidence="10" type="ordered locus">PGN_0183</name>
</gene>